<evidence type="ECO:0000255" key="1">
    <source>
        <dbReference type="HAMAP-Rule" id="MF_00484"/>
    </source>
</evidence>
<dbReference type="EC" id="2.4.1.21" evidence="1"/>
<dbReference type="EMBL" id="CP000697">
    <property type="protein sequence ID" value="ABQ29360.1"/>
    <property type="molecule type" value="Genomic_DNA"/>
</dbReference>
<dbReference type="RefSeq" id="WP_011941302.1">
    <property type="nucleotide sequence ID" value="NC_009484.1"/>
</dbReference>
<dbReference type="SMR" id="A5FUS8"/>
<dbReference type="STRING" id="349163.Acry_0132"/>
<dbReference type="CAZy" id="GT5">
    <property type="family name" value="Glycosyltransferase Family 5"/>
</dbReference>
<dbReference type="KEGG" id="acr:Acry_0132"/>
<dbReference type="eggNOG" id="COG0297">
    <property type="taxonomic scope" value="Bacteria"/>
</dbReference>
<dbReference type="HOGENOM" id="CLU_009583_18_4_5"/>
<dbReference type="UniPathway" id="UPA00164"/>
<dbReference type="Proteomes" id="UP000000245">
    <property type="component" value="Chromosome"/>
</dbReference>
<dbReference type="GO" id="GO:0005829">
    <property type="term" value="C:cytosol"/>
    <property type="evidence" value="ECO:0007669"/>
    <property type="project" value="TreeGrafter"/>
</dbReference>
<dbReference type="GO" id="GO:0009011">
    <property type="term" value="F:alpha-1,4-glucan glucosyltransferase (ADP-glucose donor) activity"/>
    <property type="evidence" value="ECO:0007669"/>
    <property type="project" value="UniProtKB-UniRule"/>
</dbReference>
<dbReference type="GO" id="GO:0004373">
    <property type="term" value="F:alpha-1,4-glucan glucosyltransferase (UDP-glucose donor) activity"/>
    <property type="evidence" value="ECO:0007669"/>
    <property type="project" value="InterPro"/>
</dbReference>
<dbReference type="GO" id="GO:0005978">
    <property type="term" value="P:glycogen biosynthetic process"/>
    <property type="evidence" value="ECO:0007669"/>
    <property type="project" value="UniProtKB-UniRule"/>
</dbReference>
<dbReference type="CDD" id="cd03791">
    <property type="entry name" value="GT5_Glycogen_synthase_DULL1-like"/>
    <property type="match status" value="1"/>
</dbReference>
<dbReference type="Gene3D" id="3.40.50.2000">
    <property type="entry name" value="Glycogen Phosphorylase B"/>
    <property type="match status" value="2"/>
</dbReference>
<dbReference type="HAMAP" id="MF_00484">
    <property type="entry name" value="Glycogen_synth"/>
    <property type="match status" value="1"/>
</dbReference>
<dbReference type="InterPro" id="IPR001296">
    <property type="entry name" value="Glyco_trans_1"/>
</dbReference>
<dbReference type="InterPro" id="IPR011835">
    <property type="entry name" value="GS/SS"/>
</dbReference>
<dbReference type="InterPro" id="IPR013534">
    <property type="entry name" value="Starch_synth_cat_dom"/>
</dbReference>
<dbReference type="NCBIfam" id="TIGR02095">
    <property type="entry name" value="glgA"/>
    <property type="match status" value="1"/>
</dbReference>
<dbReference type="NCBIfam" id="NF001899">
    <property type="entry name" value="PRK00654.1-2"/>
    <property type="match status" value="1"/>
</dbReference>
<dbReference type="NCBIfam" id="NF010699">
    <property type="entry name" value="PRK14099.1"/>
    <property type="match status" value="1"/>
</dbReference>
<dbReference type="PANTHER" id="PTHR45825:SF11">
    <property type="entry name" value="ALPHA AMYLASE DOMAIN-CONTAINING PROTEIN"/>
    <property type="match status" value="1"/>
</dbReference>
<dbReference type="PANTHER" id="PTHR45825">
    <property type="entry name" value="GRANULE-BOUND STARCH SYNTHASE 1, CHLOROPLASTIC/AMYLOPLASTIC"/>
    <property type="match status" value="1"/>
</dbReference>
<dbReference type="Pfam" id="PF08323">
    <property type="entry name" value="Glyco_transf_5"/>
    <property type="match status" value="1"/>
</dbReference>
<dbReference type="Pfam" id="PF00534">
    <property type="entry name" value="Glycos_transf_1"/>
    <property type="match status" value="1"/>
</dbReference>
<dbReference type="SUPFAM" id="SSF53756">
    <property type="entry name" value="UDP-Glycosyltransferase/glycogen phosphorylase"/>
    <property type="match status" value="1"/>
</dbReference>
<keyword id="KW-0320">Glycogen biosynthesis</keyword>
<keyword id="KW-0328">Glycosyltransferase</keyword>
<keyword id="KW-1185">Reference proteome</keyword>
<keyword id="KW-0808">Transferase</keyword>
<protein>
    <recommendedName>
        <fullName evidence="1">Glycogen synthase</fullName>
        <ecNumber evidence="1">2.4.1.21</ecNumber>
    </recommendedName>
    <alternativeName>
        <fullName evidence="1">Starch [bacterial glycogen] synthase</fullName>
    </alternativeName>
</protein>
<reference key="1">
    <citation type="submission" date="2007-05" db="EMBL/GenBank/DDBJ databases">
        <title>Complete sequence of chromosome of Acidiphilium cryptum JF-5.</title>
        <authorList>
            <consortium name="US DOE Joint Genome Institute"/>
            <person name="Copeland A."/>
            <person name="Lucas S."/>
            <person name="Lapidus A."/>
            <person name="Barry K."/>
            <person name="Detter J.C."/>
            <person name="Glavina del Rio T."/>
            <person name="Hammon N."/>
            <person name="Israni S."/>
            <person name="Dalin E."/>
            <person name="Tice H."/>
            <person name="Pitluck S."/>
            <person name="Sims D."/>
            <person name="Brettin T."/>
            <person name="Bruce D."/>
            <person name="Han C."/>
            <person name="Schmutz J."/>
            <person name="Larimer F."/>
            <person name="Land M."/>
            <person name="Hauser L."/>
            <person name="Kyrpides N."/>
            <person name="Kim E."/>
            <person name="Magnuson T."/>
            <person name="Richardson P."/>
        </authorList>
    </citation>
    <scope>NUCLEOTIDE SEQUENCE [LARGE SCALE GENOMIC DNA]</scope>
    <source>
        <strain>JF-5</strain>
    </source>
</reference>
<sequence length="479" mass="49909">MRVLSVGSEIYPLVKTGGLADVMGALPAALSSEGITVRSLVPGYPAVTAALDRAESVLRIPDLFGGAAEIRAAAAGRHDLFVLDAPHLYARPGNPYIASNGVDWSDNAQRFAALCRAGALLARGAVGGFVPDLLHAHDWQAGLVPAYLHYEGHAAPPCVFTVHNLAFQGWFPAHLLGALGLPASAFVIDGVEYFGGIGFLKAGLQFADAITTVSPRYATEIATQDGGMGLDGLLRKRGSAVHGILNGLDTATWNPATDEHLAARYDVANLAARAVNKRAVQARMGLAPDPRALLFGVVSRLAGQKGIDLIIEALPVLDALGAQLAVLGTGETGIEASLREAVAARPGRVAAIIGFEESLSHLIQGGADAILVPSRFEPCGLTQLAAQRYGAIPVVSLVGGLVDTVIDANPVAISAGVATGIQFGPVSEAGLSDGLRRTAALYADPDKWSRMQRNAMALDVSWTEPARNYAALYRSLTSR</sequence>
<organism>
    <name type="scientific">Acidiphilium cryptum (strain JF-5)</name>
    <dbReference type="NCBI Taxonomy" id="349163"/>
    <lineage>
        <taxon>Bacteria</taxon>
        <taxon>Pseudomonadati</taxon>
        <taxon>Pseudomonadota</taxon>
        <taxon>Alphaproteobacteria</taxon>
        <taxon>Acetobacterales</taxon>
        <taxon>Acidocellaceae</taxon>
        <taxon>Acidiphilium</taxon>
    </lineage>
</organism>
<feature type="chain" id="PRO_1000014338" description="Glycogen synthase">
    <location>
        <begin position="1"/>
        <end position="479"/>
    </location>
</feature>
<feature type="binding site" evidence="1">
    <location>
        <position position="15"/>
    </location>
    <ligand>
        <name>ADP-alpha-D-glucose</name>
        <dbReference type="ChEBI" id="CHEBI:57498"/>
    </ligand>
</feature>
<accession>A5FUS8</accession>
<proteinExistence type="inferred from homology"/>
<gene>
    <name evidence="1" type="primary">glgA</name>
    <name type="ordered locus">Acry_0132</name>
</gene>
<comment type="function">
    <text evidence="1">Synthesizes alpha-1,4-glucan chains using ADP-glucose.</text>
</comment>
<comment type="catalytic activity">
    <reaction evidence="1">
        <text>[(1-&gt;4)-alpha-D-glucosyl](n) + ADP-alpha-D-glucose = [(1-&gt;4)-alpha-D-glucosyl](n+1) + ADP + H(+)</text>
        <dbReference type="Rhea" id="RHEA:18189"/>
        <dbReference type="Rhea" id="RHEA-COMP:9584"/>
        <dbReference type="Rhea" id="RHEA-COMP:9587"/>
        <dbReference type="ChEBI" id="CHEBI:15378"/>
        <dbReference type="ChEBI" id="CHEBI:15444"/>
        <dbReference type="ChEBI" id="CHEBI:57498"/>
        <dbReference type="ChEBI" id="CHEBI:456216"/>
        <dbReference type="EC" id="2.4.1.21"/>
    </reaction>
</comment>
<comment type="pathway">
    <text evidence="1">Glycan biosynthesis; glycogen biosynthesis.</text>
</comment>
<comment type="similarity">
    <text evidence="1">Belongs to the glycosyltransferase 1 family. Bacterial/plant glycogen synthase subfamily.</text>
</comment>
<name>GLGA_ACICJ</name>